<keyword id="KW-0010">Activator</keyword>
<keyword id="KW-0217">Developmental protein</keyword>
<keyword id="KW-0238">DNA-binding</keyword>
<keyword id="KW-0539">Nucleus</keyword>
<keyword id="KW-0804">Transcription</keyword>
<keyword id="KW-0805">Transcription regulation</keyword>
<feature type="chain" id="PRO_0000129154" description="Floricaula/leafy-like protein FL1">
    <location>
        <begin position="1"/>
        <end position="404"/>
    </location>
</feature>
<feature type="DNA-binding region" evidence="1">
    <location>
        <begin position="246"/>
        <end position="250"/>
    </location>
</feature>
<feature type="DNA-binding region" evidence="1">
    <location>
        <begin position="315"/>
        <end position="322"/>
    </location>
</feature>
<feature type="DNA-binding region" evidence="1">
    <location>
        <begin position="386"/>
        <end position="389"/>
    </location>
</feature>
<feature type="region of interest" description="Disordered" evidence="2">
    <location>
        <begin position="210"/>
        <end position="251"/>
    </location>
</feature>
<feature type="compositionally biased region" description="Basic and acidic residues" evidence="2">
    <location>
        <begin position="215"/>
        <end position="228"/>
    </location>
</feature>
<feature type="compositionally biased region" description="Basic and acidic residues" evidence="2">
    <location>
        <begin position="235"/>
        <end position="249"/>
    </location>
</feature>
<feature type="site" description="Interaction with DNA" evidence="1">
    <location>
        <position position="293"/>
    </location>
</feature>
<feature type="site" description="Interaction with DNA" evidence="1">
    <location>
        <position position="300"/>
    </location>
</feature>
<feature type="site" description="Interaction with DNA" evidence="1">
    <location>
        <position position="304"/>
    </location>
</feature>
<feature type="site" description="Interaction with DNA" evidence="1">
    <location>
        <position position="351"/>
    </location>
</feature>
<sequence>MDAEHFPVGFFRWDQRPAPVVAAAAAPTTTVFNKDHGRPLEVILPMNGRKDLKSLEDLFKEYGVRYVTLAKMTEMGFTANTLVNMTEEEIEDLMKTLVELYHMDLLIGERYGIKSAIRAEKKRLQDSLEMQRLEILSEAERKRILHDDQNTFAAAMASEGTSKELRANDPLIFPESTSADHAPMNIASCKDSTLILQNSNQAQFCGSGLIGVPEHSSESDERKADTNKQKRRRSKEPGEDGEDRPREHPFIVTEPGELARGKKNGLDYLFDLYEQCGKFLLEVQRIAKEKGEKCPTKVTNQVFRHAKHNGAVYINKPKMRHYVHCYALHCLDSEQSNHLRRLYKERGENVGAWRQACYYPLVAIARENNWDIEGIFNRNEKLKIWYVPTKLRQLCHMERSKECQ</sequence>
<reference key="1">
    <citation type="online journal article" date="1997" name="Plant Gene Register">
        <title>Isolation and characterisation of a FLORICAULA/LEAFY-like cDNA from Pinus radiata.</title>
        <authorList>
            <person name="Mouradov A."/>
            <person name="Glassick T."/>
            <person name="Teasdale R.D."/>
        </authorList>
        <locator>PGR97-026</locator>
    </citation>
    <scope>NUCLEOTIDE SEQUENCE [MRNA]</scope>
    <source>
        <tissue>Cone</tissue>
    </source>
</reference>
<reference key="2">
    <citation type="journal article" date="1998" name="Proc. Natl. Acad. Sci. U.S.A.">
        <title>NEEDLY, a Pinus radiata ortholog of FLORICAULA/LEAFY genes, expressed in both reproductive and vegetative meristems.</title>
        <authorList>
            <person name="Mouradov A."/>
            <person name="Glassick T."/>
            <person name="Hamdorf B."/>
            <person name="Murphy L."/>
            <person name="Fowler B."/>
            <person name="Marla S."/>
            <person name="Teasdale R.D."/>
        </authorList>
    </citation>
    <scope>CHARACTERIZATION</scope>
</reference>
<evidence type="ECO:0000250" key="1"/>
<evidence type="ECO:0000256" key="2">
    <source>
        <dbReference type="SAM" id="MobiDB-lite"/>
    </source>
</evidence>
<evidence type="ECO:0000305" key="3"/>
<organism>
    <name type="scientific">Pinus radiata</name>
    <name type="common">Monterey pine</name>
    <name type="synonym">Pinus insignis</name>
    <dbReference type="NCBI Taxonomy" id="3347"/>
    <lineage>
        <taxon>Eukaryota</taxon>
        <taxon>Viridiplantae</taxon>
        <taxon>Streptophyta</taxon>
        <taxon>Embryophyta</taxon>
        <taxon>Tracheophyta</taxon>
        <taxon>Spermatophyta</taxon>
        <taxon>Pinopsida</taxon>
        <taxon>Pinidae</taxon>
        <taxon>Conifers I</taxon>
        <taxon>Pinales</taxon>
        <taxon>Pinaceae</taxon>
        <taxon>Pinus</taxon>
        <taxon>Pinus subgen. Pinus</taxon>
    </lineage>
</organism>
<dbReference type="EMBL" id="U76757">
    <property type="protein sequence ID" value="AAB68601.1"/>
    <property type="molecule type" value="mRNA"/>
</dbReference>
<dbReference type="PIR" id="T09606">
    <property type="entry name" value="T09606"/>
</dbReference>
<dbReference type="SMR" id="O04407"/>
<dbReference type="GO" id="GO:0005634">
    <property type="term" value="C:nucleus"/>
    <property type="evidence" value="ECO:0007669"/>
    <property type="project" value="UniProtKB-SubCell"/>
</dbReference>
<dbReference type="GO" id="GO:0003677">
    <property type="term" value="F:DNA binding"/>
    <property type="evidence" value="ECO:0007669"/>
    <property type="project" value="UniProtKB-KW"/>
</dbReference>
<dbReference type="GO" id="GO:0006355">
    <property type="term" value="P:regulation of DNA-templated transcription"/>
    <property type="evidence" value="ECO:0007669"/>
    <property type="project" value="InterPro"/>
</dbReference>
<dbReference type="Gene3D" id="1.10.4180.10">
    <property type="entry name" value="Protein LEAFY"/>
    <property type="match status" value="1"/>
</dbReference>
<dbReference type="InterPro" id="IPR035209">
    <property type="entry name" value="FLO/LFY_C"/>
</dbReference>
<dbReference type="InterPro" id="IPR002910">
    <property type="entry name" value="FLO_LFY"/>
</dbReference>
<dbReference type="InterPro" id="IPR038276">
    <property type="entry name" value="Floricaula/leafy_C_sf"/>
</dbReference>
<dbReference type="InterPro" id="IPR035079">
    <property type="entry name" value="LFY_SAM"/>
</dbReference>
<dbReference type="PANTHER" id="PTHR36079">
    <property type="entry name" value="PROTEIN LEAFY"/>
    <property type="match status" value="1"/>
</dbReference>
<dbReference type="PANTHER" id="PTHR36079:SF1">
    <property type="entry name" value="PROTEIN LEAFY"/>
    <property type="match status" value="1"/>
</dbReference>
<dbReference type="Pfam" id="PF17538">
    <property type="entry name" value="C_LFY_FLO"/>
    <property type="match status" value="1"/>
</dbReference>
<dbReference type="Pfam" id="PF01698">
    <property type="entry name" value="SAM_LFY"/>
    <property type="match status" value="1"/>
</dbReference>
<comment type="function">
    <text evidence="1">Probable transcription factor.</text>
</comment>
<comment type="subcellular location">
    <subcellularLocation>
        <location evidence="3">Nucleus</location>
    </subcellularLocation>
</comment>
<comment type="tissue specificity">
    <text>Expressed in both male and female cones, vegetative buds and needles, but not in the roots.</text>
</comment>
<comment type="similarity">
    <text evidence="3">Belongs to the FLO/LFY family.</text>
</comment>
<name>NEED_PINRA</name>
<protein>
    <recommendedName>
        <fullName>Floricaula/leafy-like protein FL1</fullName>
    </recommendedName>
    <alternativeName>
        <fullName>Protein NEEDLY</fullName>
    </alternativeName>
</protein>
<accession>O04407</accession>
<proteinExistence type="evidence at protein level"/>